<dbReference type="EC" id="2.7.4.22" evidence="1"/>
<dbReference type="EMBL" id="CP000097">
    <property type="protein sequence ID" value="ABB26606.1"/>
    <property type="molecule type" value="Genomic_DNA"/>
</dbReference>
<dbReference type="RefSeq" id="WP_011360417.1">
    <property type="nucleotide sequence ID" value="NC_007513.1"/>
</dbReference>
<dbReference type="SMR" id="Q3AV98"/>
<dbReference type="STRING" id="316279.Syncc9902_1648"/>
<dbReference type="KEGG" id="sye:Syncc9902_1648"/>
<dbReference type="eggNOG" id="COG0528">
    <property type="taxonomic scope" value="Bacteria"/>
</dbReference>
<dbReference type="HOGENOM" id="CLU_033861_0_0_3"/>
<dbReference type="OrthoDB" id="9807458at2"/>
<dbReference type="UniPathway" id="UPA00159">
    <property type="reaction ID" value="UER00275"/>
</dbReference>
<dbReference type="Proteomes" id="UP000002712">
    <property type="component" value="Chromosome"/>
</dbReference>
<dbReference type="GO" id="GO:0005737">
    <property type="term" value="C:cytoplasm"/>
    <property type="evidence" value="ECO:0007669"/>
    <property type="project" value="UniProtKB-SubCell"/>
</dbReference>
<dbReference type="GO" id="GO:0005524">
    <property type="term" value="F:ATP binding"/>
    <property type="evidence" value="ECO:0007669"/>
    <property type="project" value="UniProtKB-KW"/>
</dbReference>
<dbReference type="GO" id="GO:0033862">
    <property type="term" value="F:UMP kinase activity"/>
    <property type="evidence" value="ECO:0007669"/>
    <property type="project" value="UniProtKB-EC"/>
</dbReference>
<dbReference type="GO" id="GO:0044210">
    <property type="term" value="P:'de novo' CTP biosynthetic process"/>
    <property type="evidence" value="ECO:0007669"/>
    <property type="project" value="UniProtKB-UniRule"/>
</dbReference>
<dbReference type="GO" id="GO:0006225">
    <property type="term" value="P:UDP biosynthetic process"/>
    <property type="evidence" value="ECO:0007669"/>
    <property type="project" value="TreeGrafter"/>
</dbReference>
<dbReference type="CDD" id="cd04254">
    <property type="entry name" value="AAK_UMPK-PyrH-Ec"/>
    <property type="match status" value="1"/>
</dbReference>
<dbReference type="FunFam" id="3.40.1160.10:FF:000001">
    <property type="entry name" value="Uridylate kinase"/>
    <property type="match status" value="1"/>
</dbReference>
<dbReference type="Gene3D" id="3.40.1160.10">
    <property type="entry name" value="Acetylglutamate kinase-like"/>
    <property type="match status" value="1"/>
</dbReference>
<dbReference type="HAMAP" id="MF_01220_B">
    <property type="entry name" value="PyrH_B"/>
    <property type="match status" value="1"/>
</dbReference>
<dbReference type="InterPro" id="IPR036393">
    <property type="entry name" value="AceGlu_kinase-like_sf"/>
</dbReference>
<dbReference type="InterPro" id="IPR001048">
    <property type="entry name" value="Asp/Glu/Uridylate_kinase"/>
</dbReference>
<dbReference type="InterPro" id="IPR011817">
    <property type="entry name" value="Uridylate_kinase"/>
</dbReference>
<dbReference type="InterPro" id="IPR015963">
    <property type="entry name" value="Uridylate_kinase_bac"/>
</dbReference>
<dbReference type="NCBIfam" id="TIGR02075">
    <property type="entry name" value="pyrH_bact"/>
    <property type="match status" value="1"/>
</dbReference>
<dbReference type="PANTHER" id="PTHR42833">
    <property type="entry name" value="URIDYLATE KINASE"/>
    <property type="match status" value="1"/>
</dbReference>
<dbReference type="PANTHER" id="PTHR42833:SF4">
    <property type="entry name" value="URIDYLATE KINASE PUMPKIN, CHLOROPLASTIC"/>
    <property type="match status" value="1"/>
</dbReference>
<dbReference type="Pfam" id="PF00696">
    <property type="entry name" value="AA_kinase"/>
    <property type="match status" value="1"/>
</dbReference>
<dbReference type="PIRSF" id="PIRSF005650">
    <property type="entry name" value="Uridylate_kin"/>
    <property type="match status" value="1"/>
</dbReference>
<dbReference type="SUPFAM" id="SSF53633">
    <property type="entry name" value="Carbamate kinase-like"/>
    <property type="match status" value="1"/>
</dbReference>
<reference key="1">
    <citation type="submission" date="2005-08" db="EMBL/GenBank/DDBJ databases">
        <title>Complete sequence of Synechococcus sp. CC9902.</title>
        <authorList>
            <person name="Copeland A."/>
            <person name="Lucas S."/>
            <person name="Lapidus A."/>
            <person name="Barry K."/>
            <person name="Detter J.C."/>
            <person name="Glavina T."/>
            <person name="Hammon N."/>
            <person name="Israni S."/>
            <person name="Pitluck S."/>
            <person name="Martinez M."/>
            <person name="Schmutz J."/>
            <person name="Larimer F."/>
            <person name="Land M."/>
            <person name="Kyrpides N."/>
            <person name="Ivanova N."/>
            <person name="Richardson P."/>
        </authorList>
    </citation>
    <scope>NUCLEOTIDE SEQUENCE [LARGE SCALE GENOMIC DNA]</scope>
    <source>
        <strain>CC9902</strain>
    </source>
</reference>
<organism>
    <name type="scientific">Synechococcus sp. (strain CC9902)</name>
    <dbReference type="NCBI Taxonomy" id="316279"/>
    <lineage>
        <taxon>Bacteria</taxon>
        <taxon>Bacillati</taxon>
        <taxon>Cyanobacteriota</taxon>
        <taxon>Cyanophyceae</taxon>
        <taxon>Synechococcales</taxon>
        <taxon>Synechococcaceae</taxon>
        <taxon>Synechococcus</taxon>
    </lineage>
</organism>
<proteinExistence type="inferred from homology"/>
<evidence type="ECO:0000255" key="1">
    <source>
        <dbReference type="HAMAP-Rule" id="MF_01220"/>
    </source>
</evidence>
<comment type="function">
    <text evidence="1">Catalyzes the reversible phosphorylation of UMP to UDP.</text>
</comment>
<comment type="catalytic activity">
    <reaction evidence="1">
        <text>UMP + ATP = UDP + ADP</text>
        <dbReference type="Rhea" id="RHEA:24400"/>
        <dbReference type="ChEBI" id="CHEBI:30616"/>
        <dbReference type="ChEBI" id="CHEBI:57865"/>
        <dbReference type="ChEBI" id="CHEBI:58223"/>
        <dbReference type="ChEBI" id="CHEBI:456216"/>
        <dbReference type="EC" id="2.7.4.22"/>
    </reaction>
</comment>
<comment type="activity regulation">
    <text evidence="1">Allosterically activated by GTP. Inhibited by UTP.</text>
</comment>
<comment type="pathway">
    <text evidence="1">Pyrimidine metabolism; CTP biosynthesis via de novo pathway; UDP from UMP (UMPK route): step 1/1.</text>
</comment>
<comment type="subunit">
    <text evidence="1">Homohexamer.</text>
</comment>
<comment type="subcellular location">
    <subcellularLocation>
        <location evidence="1">Cytoplasm</location>
    </subcellularLocation>
</comment>
<comment type="similarity">
    <text evidence="1">Belongs to the UMP kinase family.</text>
</comment>
<keyword id="KW-0021">Allosteric enzyme</keyword>
<keyword id="KW-0067">ATP-binding</keyword>
<keyword id="KW-0963">Cytoplasm</keyword>
<keyword id="KW-0418">Kinase</keyword>
<keyword id="KW-0547">Nucleotide-binding</keyword>
<keyword id="KW-0665">Pyrimidine biosynthesis</keyword>
<keyword id="KW-1185">Reference proteome</keyword>
<keyword id="KW-0808">Transferase</keyword>
<gene>
    <name evidence="1" type="primary">pyrH</name>
    <name type="ordered locus">Syncc9902_1648</name>
</gene>
<feature type="chain" id="PRO_0000323965" description="Uridylate kinase">
    <location>
        <begin position="1"/>
        <end position="237"/>
    </location>
</feature>
<feature type="region of interest" description="Involved in allosteric activation by GTP" evidence="1">
    <location>
        <begin position="17"/>
        <end position="22"/>
    </location>
</feature>
<feature type="binding site" evidence="1">
    <location>
        <begin position="9"/>
        <end position="12"/>
    </location>
    <ligand>
        <name>ATP</name>
        <dbReference type="ChEBI" id="CHEBI:30616"/>
    </ligand>
</feature>
<feature type="binding site" evidence="1">
    <location>
        <position position="51"/>
    </location>
    <ligand>
        <name>UMP</name>
        <dbReference type="ChEBI" id="CHEBI:57865"/>
    </ligand>
</feature>
<feature type="binding site" evidence="1">
    <location>
        <position position="52"/>
    </location>
    <ligand>
        <name>ATP</name>
        <dbReference type="ChEBI" id="CHEBI:30616"/>
    </ligand>
</feature>
<feature type="binding site" evidence="1">
    <location>
        <position position="56"/>
    </location>
    <ligand>
        <name>ATP</name>
        <dbReference type="ChEBI" id="CHEBI:30616"/>
    </ligand>
</feature>
<feature type="binding site" evidence="1">
    <location>
        <position position="71"/>
    </location>
    <ligand>
        <name>UMP</name>
        <dbReference type="ChEBI" id="CHEBI:57865"/>
    </ligand>
</feature>
<feature type="binding site" evidence="1">
    <location>
        <begin position="132"/>
        <end position="139"/>
    </location>
    <ligand>
        <name>UMP</name>
        <dbReference type="ChEBI" id="CHEBI:57865"/>
    </ligand>
</feature>
<feature type="binding site" evidence="1">
    <location>
        <position position="159"/>
    </location>
    <ligand>
        <name>ATP</name>
        <dbReference type="ChEBI" id="CHEBI:30616"/>
    </ligand>
</feature>
<feature type="binding site" evidence="1">
    <location>
        <position position="165"/>
    </location>
    <ligand>
        <name>ATP</name>
        <dbReference type="ChEBI" id="CHEBI:30616"/>
    </ligand>
</feature>
<feature type="binding site" evidence="1">
    <location>
        <position position="168"/>
    </location>
    <ligand>
        <name>ATP</name>
        <dbReference type="ChEBI" id="CHEBI:30616"/>
    </ligand>
</feature>
<sequence>MKYTRVLLKLSGEALMGSQGYGIDPEIVHSIAEDVAKVVASGTQLAIVVGGGNIFRGLKGSAAGMDRATADYVGMLATVMNAITLQDGLERAGVPTRVQTAIAMQEVAEPYIRRKAMRHLEKGRVVVFGAGCGNPFFTTDTTAALRAAEINADVVFKATKVDGVYDKDPAKHPDAVKHDHLSYQDVLSGELGVMDATAISLCKENNIPIVVFDLFEPGNIGKAVAGEPIGSRIGNPV</sequence>
<name>PYRH_SYNS9</name>
<accession>Q3AV98</accession>
<protein>
    <recommendedName>
        <fullName evidence="1">Uridylate kinase</fullName>
        <shortName evidence="1">UK</shortName>
        <ecNumber evidence="1">2.7.4.22</ecNumber>
    </recommendedName>
    <alternativeName>
        <fullName evidence="1">Uridine monophosphate kinase</fullName>
        <shortName evidence="1">UMP kinase</shortName>
        <shortName evidence="1">UMPK</shortName>
    </alternativeName>
</protein>